<proteinExistence type="inferred from homology"/>
<comment type="catalytic activity">
    <reaction evidence="1">
        <text>sn-glycerol 3-phosphate + an acyl-CoA = a 1-acyl-sn-glycero-3-phosphate + CoA</text>
        <dbReference type="Rhea" id="RHEA:15325"/>
        <dbReference type="ChEBI" id="CHEBI:57287"/>
        <dbReference type="ChEBI" id="CHEBI:57597"/>
        <dbReference type="ChEBI" id="CHEBI:57970"/>
        <dbReference type="ChEBI" id="CHEBI:58342"/>
        <dbReference type="EC" id="2.3.1.15"/>
    </reaction>
</comment>
<comment type="pathway">
    <text evidence="1">Phospholipid metabolism; CDP-diacylglycerol biosynthesis; CDP-diacylglycerol from sn-glycerol 3-phosphate: step 1/3.</text>
</comment>
<comment type="subcellular location">
    <subcellularLocation>
        <location evidence="1">Cell membrane</location>
        <topology evidence="1">Peripheral membrane protein</topology>
        <orientation evidence="1">Cytoplasmic side</orientation>
    </subcellularLocation>
</comment>
<comment type="domain">
    <text evidence="1">The HXXXXD motif is essential for acyltransferase activity and may constitute the binding site for the phosphate moiety of the glycerol-3-phosphate.</text>
</comment>
<comment type="similarity">
    <text evidence="1">Belongs to the GPAT/DAPAT family.</text>
</comment>
<reference key="1">
    <citation type="journal article" date="2007" name="Proc. Natl. Acad. Sci. U.S.A.">
        <title>Genome plasticity of BCG and impact on vaccine efficacy.</title>
        <authorList>
            <person name="Brosch R."/>
            <person name="Gordon S.V."/>
            <person name="Garnier T."/>
            <person name="Eiglmeier K."/>
            <person name="Frigui W."/>
            <person name="Valenti P."/>
            <person name="Dos Santos S."/>
            <person name="Duthoy S."/>
            <person name="Lacroix C."/>
            <person name="Garcia-Pelayo C."/>
            <person name="Inwald J.K."/>
            <person name="Golby P."/>
            <person name="Garcia J.N."/>
            <person name="Hewinson R.G."/>
            <person name="Behr M.A."/>
            <person name="Quail M.A."/>
            <person name="Churcher C."/>
            <person name="Barrell B.G."/>
            <person name="Parkhill J."/>
            <person name="Cole S.T."/>
        </authorList>
    </citation>
    <scope>NUCLEOTIDE SEQUENCE [LARGE SCALE GENOMIC DNA]</scope>
    <source>
        <strain>BCG / Pasteur 1173P2</strain>
    </source>
</reference>
<gene>
    <name evidence="1" type="primary">plsB</name>
    <name type="ordered locus">BCG_2500c</name>
</gene>
<evidence type="ECO:0000255" key="1">
    <source>
        <dbReference type="HAMAP-Rule" id="MF_00393"/>
    </source>
</evidence>
<feature type="chain" id="PRO_1000049438" description="Glycerol-3-phosphate acyltransferase">
    <location>
        <begin position="1"/>
        <end position="789"/>
    </location>
</feature>
<feature type="short sequence motif" description="HXXXXD motif">
    <location>
        <begin position="275"/>
        <end position="280"/>
    </location>
</feature>
<dbReference type="EC" id="2.3.1.15" evidence="1"/>
<dbReference type="EMBL" id="AM408590">
    <property type="protein sequence ID" value="CAL72488.1"/>
    <property type="molecule type" value="Genomic_DNA"/>
</dbReference>
<dbReference type="RefSeq" id="WP_003901413.1">
    <property type="nucleotide sequence ID" value="NC_008769.1"/>
</dbReference>
<dbReference type="SMR" id="A1KLH6"/>
<dbReference type="KEGG" id="mbb:BCG_2500c"/>
<dbReference type="HOGENOM" id="CLU_015407_1_0_11"/>
<dbReference type="UniPathway" id="UPA00557">
    <property type="reaction ID" value="UER00612"/>
</dbReference>
<dbReference type="Proteomes" id="UP000001472">
    <property type="component" value="Chromosome"/>
</dbReference>
<dbReference type="GO" id="GO:0005886">
    <property type="term" value="C:plasma membrane"/>
    <property type="evidence" value="ECO:0007669"/>
    <property type="project" value="UniProtKB-SubCell"/>
</dbReference>
<dbReference type="GO" id="GO:0004366">
    <property type="term" value="F:glycerol-3-phosphate O-acyltransferase activity"/>
    <property type="evidence" value="ECO:0007669"/>
    <property type="project" value="UniProtKB-UniRule"/>
</dbReference>
<dbReference type="GO" id="GO:0016024">
    <property type="term" value="P:CDP-diacylglycerol biosynthetic process"/>
    <property type="evidence" value="ECO:0007669"/>
    <property type="project" value="UniProtKB-UniRule"/>
</dbReference>
<dbReference type="CDD" id="cd07993">
    <property type="entry name" value="LPLAT_DHAPAT-like"/>
    <property type="match status" value="1"/>
</dbReference>
<dbReference type="HAMAP" id="MF_00393">
    <property type="entry name" value="Glyc3P_acyltrans"/>
    <property type="match status" value="1"/>
</dbReference>
<dbReference type="InterPro" id="IPR022284">
    <property type="entry name" value="GPAT/DHAPAT"/>
</dbReference>
<dbReference type="InterPro" id="IPR045520">
    <property type="entry name" value="GPAT/DHAPAT_C"/>
</dbReference>
<dbReference type="InterPro" id="IPR041728">
    <property type="entry name" value="GPAT/DHAPAT_LPLAT"/>
</dbReference>
<dbReference type="InterPro" id="IPR028354">
    <property type="entry name" value="GPAT_PlsB"/>
</dbReference>
<dbReference type="InterPro" id="IPR002123">
    <property type="entry name" value="Plipid/glycerol_acylTrfase"/>
</dbReference>
<dbReference type="NCBIfam" id="NF002886">
    <property type="entry name" value="PRK03355.1"/>
    <property type="match status" value="1"/>
</dbReference>
<dbReference type="PANTHER" id="PTHR12563:SF17">
    <property type="entry name" value="DIHYDROXYACETONE PHOSPHATE ACYLTRANSFERASE"/>
    <property type="match status" value="1"/>
</dbReference>
<dbReference type="PANTHER" id="PTHR12563">
    <property type="entry name" value="GLYCEROL-3-PHOSPHATE ACYLTRANSFERASE"/>
    <property type="match status" value="1"/>
</dbReference>
<dbReference type="Pfam" id="PF01553">
    <property type="entry name" value="Acyltransferase"/>
    <property type="match status" value="1"/>
</dbReference>
<dbReference type="Pfam" id="PF19277">
    <property type="entry name" value="GPAT_C"/>
    <property type="match status" value="1"/>
</dbReference>
<dbReference type="PIRSF" id="PIRSF500064">
    <property type="entry name" value="GPAT"/>
    <property type="match status" value="1"/>
</dbReference>
<dbReference type="PIRSF" id="PIRSF000437">
    <property type="entry name" value="GPAT_DHAPAT"/>
    <property type="match status" value="1"/>
</dbReference>
<dbReference type="SMART" id="SM00563">
    <property type="entry name" value="PlsC"/>
    <property type="match status" value="1"/>
</dbReference>
<dbReference type="SUPFAM" id="SSF69593">
    <property type="entry name" value="Glycerol-3-phosphate (1)-acyltransferase"/>
    <property type="match status" value="1"/>
</dbReference>
<protein>
    <recommendedName>
        <fullName evidence="1">Glycerol-3-phosphate acyltransferase</fullName>
        <shortName evidence="1">GPAT</shortName>
        <ecNumber evidence="1">2.3.1.15</ecNumber>
    </recommendedName>
</protein>
<organism>
    <name type="scientific">Mycobacterium bovis (strain BCG / Pasteur 1173P2)</name>
    <dbReference type="NCBI Taxonomy" id="410289"/>
    <lineage>
        <taxon>Bacteria</taxon>
        <taxon>Bacillati</taxon>
        <taxon>Actinomycetota</taxon>
        <taxon>Actinomycetes</taxon>
        <taxon>Mycobacteriales</taxon>
        <taxon>Mycobacteriaceae</taxon>
        <taxon>Mycobacterium</taxon>
        <taxon>Mycobacterium tuberculosis complex</taxon>
    </lineage>
</organism>
<keyword id="KW-0012">Acyltransferase</keyword>
<keyword id="KW-1003">Cell membrane</keyword>
<keyword id="KW-0444">Lipid biosynthesis</keyword>
<keyword id="KW-0443">Lipid metabolism</keyword>
<keyword id="KW-0472">Membrane</keyword>
<keyword id="KW-0594">Phospholipid biosynthesis</keyword>
<keyword id="KW-1208">Phospholipid metabolism</keyword>
<keyword id="KW-0808">Transferase</keyword>
<accession>A1KLH6</accession>
<sequence length="789" mass="88368">MTKPAADASAVLTAEDTLVLASTATPVEMELIMGWLGQQRARHPDSKFDILKLPPRNAPPAALTALVEQLEPGFASSPQSGEDRSIVPVRVIWLPPADRSRAGKVAALLPGRDPYHPSQRQQRRILRTDPRRARVVAGESAKVSELRQQWRDTTVAEHKRDFAQFVSRRALLALARAEYRILGPQYKSPRLVKPEMLASARFRAGLDRIPGATVEDAGKMLDELSTGWSQVSVDLVSVLGRLASRGFDPEFDYDEYQVAAMRAALEAHPAVLLFSHRSYIDGVVVPVAMQDNRLPPVHMFGGINLSFGLMGPLMRRSGMIFIRRNIGNDPLYKYVLKEYVGYVVEKRFNLSWSIEGTRSRTGKMLPPKLGLMSYVADAYLDGRSDDILLQGVSICFDQLHEITEYAAYARGAEKTPEGLRWLYNFIKAQGERNFGKIYVRFPEAVSMRQYLGAPHGELTQDPAAKRLALQKMSFEVAWRILQATPVTATGLVSALLLTTRGTALTLDQLHHTLQDSLDYLERKQSPVSTSALRLRSREGVRAAADALSNGHPVTRVDSGREPVWYIAPDDEHAAAFYRNSVIHAFLETSIVELALAHAKHAEGDRVAAFWAQAMRLRDLLKFDFYFADSTAFRANIAQEMAWHQDWEDHLGVGGNEIDAMLYAKRPLMSDAMLRVFFEAYEIVADVLRDAPPDIGPEELTELALGLGRQFVAQGRVRSSEPVSTLLFATARQVAVDQELIAPAADLAERRVAFRRELRNILRDFDYVEQIARNQFVAREFKARQGRDRI</sequence>
<name>PLSB_MYCBP</name>